<reference key="1">
    <citation type="journal article" date="2010" name="Genome Biol.">
        <title>Structure and dynamics of the pan-genome of Streptococcus pneumoniae and closely related species.</title>
        <authorList>
            <person name="Donati C."/>
            <person name="Hiller N.L."/>
            <person name="Tettelin H."/>
            <person name="Muzzi A."/>
            <person name="Croucher N.J."/>
            <person name="Angiuoli S.V."/>
            <person name="Oggioni M."/>
            <person name="Dunning Hotopp J.C."/>
            <person name="Hu F.Z."/>
            <person name="Riley D.R."/>
            <person name="Covacci A."/>
            <person name="Mitchell T.J."/>
            <person name="Bentley S.D."/>
            <person name="Kilian M."/>
            <person name="Ehrlich G.D."/>
            <person name="Rappuoli R."/>
            <person name="Moxon E.R."/>
            <person name="Masignani V."/>
        </authorList>
    </citation>
    <scope>NUCLEOTIDE SEQUENCE [LARGE SCALE GENOMIC DNA]</scope>
    <source>
        <strain>70585</strain>
    </source>
</reference>
<evidence type="ECO:0000255" key="1">
    <source>
        <dbReference type="HAMAP-Rule" id="MF_00054"/>
    </source>
</evidence>
<sequence length="693" mass="76831">MAREFSLEKTRNIGIMAHVDAGKTTTTERILYYTGKIHKIGETHEGASQMDWMEQEQERGITITSAATTAQWNNHRVNIIDTPGHVDFTIEVQRSLRVLDGAVTVLDSQSGVEPQTETVWRQATEYGVPRIVFANKMDKIGADFLYSVSTLHDRLQANAHPIQLPIGSEDDFRGIIDLIKMKAEIYTNDLGTDILEEDIPAEYLDQAQEYREKLIEAVAETDEELMMKYLEGEEITNEELKAGIRKATINVEFFPVLCGSAFKNKGVQLMLDAVIDYLPSPLDIPAIKGINPDTDAEEIRPASDEEPFAALAFKIMTDPFVGRLTFFRVYSGVLQSGSYVLNTSKGKRERIGRILQMHANSRQEIDTVYSGDIAAAVGLKDTTTGDSLTDEKAKIILESINVPEPVIQLMVEPKSKADQDKMGIALQKLAEEDPTFRVETNVETGETVISGMGELHLDVLVDRMRREFKVEANVGAPQVSYRETFRASTQARGFFKRQSGGKGQFGDVWIEFTPNEEGKGFEFENAIVGGVVPREFIPAVEKGLVESMANGVLAGYPMVDVKAKLYDGSYHDVDSSETAFKIAASLSLKEAAKSAQPAILEPMMLVTITVPEENLGDVMGHVTARRGRVDGMEAHGNSQIVRAYVPLAEMFGYATVLRSASQGRGTFMMVFDHYEDVPKSVQEEIIKKNKGED</sequence>
<dbReference type="EMBL" id="CP000918">
    <property type="protein sequence ID" value="ACO16355.1"/>
    <property type="molecule type" value="Genomic_DNA"/>
</dbReference>
<dbReference type="RefSeq" id="WP_000090344.1">
    <property type="nucleotide sequence ID" value="NC_012468.1"/>
</dbReference>
<dbReference type="SMR" id="C1CB46"/>
<dbReference type="KEGG" id="snm:SP70585_0331"/>
<dbReference type="HOGENOM" id="CLU_002794_4_1_9"/>
<dbReference type="Proteomes" id="UP000002211">
    <property type="component" value="Chromosome"/>
</dbReference>
<dbReference type="GO" id="GO:0005737">
    <property type="term" value="C:cytoplasm"/>
    <property type="evidence" value="ECO:0007669"/>
    <property type="project" value="UniProtKB-SubCell"/>
</dbReference>
<dbReference type="GO" id="GO:0005525">
    <property type="term" value="F:GTP binding"/>
    <property type="evidence" value="ECO:0007669"/>
    <property type="project" value="UniProtKB-UniRule"/>
</dbReference>
<dbReference type="GO" id="GO:0003924">
    <property type="term" value="F:GTPase activity"/>
    <property type="evidence" value="ECO:0007669"/>
    <property type="project" value="InterPro"/>
</dbReference>
<dbReference type="GO" id="GO:0003746">
    <property type="term" value="F:translation elongation factor activity"/>
    <property type="evidence" value="ECO:0007669"/>
    <property type="project" value="UniProtKB-UniRule"/>
</dbReference>
<dbReference type="GO" id="GO:0032790">
    <property type="term" value="P:ribosome disassembly"/>
    <property type="evidence" value="ECO:0007669"/>
    <property type="project" value="TreeGrafter"/>
</dbReference>
<dbReference type="CDD" id="cd01886">
    <property type="entry name" value="EF-G"/>
    <property type="match status" value="1"/>
</dbReference>
<dbReference type="CDD" id="cd16262">
    <property type="entry name" value="EFG_III"/>
    <property type="match status" value="1"/>
</dbReference>
<dbReference type="CDD" id="cd01434">
    <property type="entry name" value="EFG_mtEFG1_IV"/>
    <property type="match status" value="1"/>
</dbReference>
<dbReference type="CDD" id="cd03713">
    <property type="entry name" value="EFG_mtEFG_C"/>
    <property type="match status" value="1"/>
</dbReference>
<dbReference type="CDD" id="cd04088">
    <property type="entry name" value="EFG_mtEFG_II"/>
    <property type="match status" value="1"/>
</dbReference>
<dbReference type="FunFam" id="2.40.30.10:FF:000006">
    <property type="entry name" value="Elongation factor G"/>
    <property type="match status" value="1"/>
</dbReference>
<dbReference type="FunFam" id="3.30.230.10:FF:000003">
    <property type="entry name" value="Elongation factor G"/>
    <property type="match status" value="1"/>
</dbReference>
<dbReference type="FunFam" id="3.30.70.240:FF:000001">
    <property type="entry name" value="Elongation factor G"/>
    <property type="match status" value="1"/>
</dbReference>
<dbReference type="FunFam" id="3.30.70.870:FF:000001">
    <property type="entry name" value="Elongation factor G"/>
    <property type="match status" value="1"/>
</dbReference>
<dbReference type="FunFam" id="3.40.50.300:FF:000029">
    <property type="entry name" value="Elongation factor G"/>
    <property type="match status" value="1"/>
</dbReference>
<dbReference type="Gene3D" id="3.30.230.10">
    <property type="match status" value="1"/>
</dbReference>
<dbReference type="Gene3D" id="3.30.70.240">
    <property type="match status" value="1"/>
</dbReference>
<dbReference type="Gene3D" id="3.30.70.870">
    <property type="entry name" value="Elongation Factor G (Translational Gtpase), domain 3"/>
    <property type="match status" value="1"/>
</dbReference>
<dbReference type="Gene3D" id="3.40.50.300">
    <property type="entry name" value="P-loop containing nucleotide triphosphate hydrolases"/>
    <property type="match status" value="1"/>
</dbReference>
<dbReference type="Gene3D" id="2.40.30.10">
    <property type="entry name" value="Translation factors"/>
    <property type="match status" value="1"/>
</dbReference>
<dbReference type="HAMAP" id="MF_00054_B">
    <property type="entry name" value="EF_G_EF_2_B"/>
    <property type="match status" value="1"/>
</dbReference>
<dbReference type="InterPro" id="IPR053905">
    <property type="entry name" value="EF-G-like_DII"/>
</dbReference>
<dbReference type="InterPro" id="IPR041095">
    <property type="entry name" value="EFG_II"/>
</dbReference>
<dbReference type="InterPro" id="IPR009022">
    <property type="entry name" value="EFG_III"/>
</dbReference>
<dbReference type="InterPro" id="IPR035647">
    <property type="entry name" value="EFG_III/V"/>
</dbReference>
<dbReference type="InterPro" id="IPR047872">
    <property type="entry name" value="EFG_IV"/>
</dbReference>
<dbReference type="InterPro" id="IPR035649">
    <property type="entry name" value="EFG_V"/>
</dbReference>
<dbReference type="InterPro" id="IPR000640">
    <property type="entry name" value="EFG_V-like"/>
</dbReference>
<dbReference type="InterPro" id="IPR031157">
    <property type="entry name" value="G_TR_CS"/>
</dbReference>
<dbReference type="InterPro" id="IPR027417">
    <property type="entry name" value="P-loop_NTPase"/>
</dbReference>
<dbReference type="InterPro" id="IPR020568">
    <property type="entry name" value="Ribosomal_Su5_D2-typ_SF"/>
</dbReference>
<dbReference type="InterPro" id="IPR014721">
    <property type="entry name" value="Ribsml_uS5_D2-typ_fold_subgr"/>
</dbReference>
<dbReference type="InterPro" id="IPR005225">
    <property type="entry name" value="Small_GTP-bd"/>
</dbReference>
<dbReference type="InterPro" id="IPR000795">
    <property type="entry name" value="T_Tr_GTP-bd_dom"/>
</dbReference>
<dbReference type="InterPro" id="IPR009000">
    <property type="entry name" value="Transl_B-barrel_sf"/>
</dbReference>
<dbReference type="InterPro" id="IPR004540">
    <property type="entry name" value="Transl_elong_EFG/EF2"/>
</dbReference>
<dbReference type="InterPro" id="IPR005517">
    <property type="entry name" value="Transl_elong_EFG/EF2_IV"/>
</dbReference>
<dbReference type="NCBIfam" id="TIGR00484">
    <property type="entry name" value="EF-G"/>
    <property type="match status" value="1"/>
</dbReference>
<dbReference type="NCBIfam" id="NF009379">
    <property type="entry name" value="PRK12740.1-3"/>
    <property type="match status" value="1"/>
</dbReference>
<dbReference type="NCBIfam" id="NF009381">
    <property type="entry name" value="PRK12740.1-5"/>
    <property type="match status" value="1"/>
</dbReference>
<dbReference type="NCBIfam" id="TIGR00231">
    <property type="entry name" value="small_GTP"/>
    <property type="match status" value="1"/>
</dbReference>
<dbReference type="PANTHER" id="PTHR43261:SF1">
    <property type="entry name" value="RIBOSOME-RELEASING FACTOR 2, MITOCHONDRIAL"/>
    <property type="match status" value="1"/>
</dbReference>
<dbReference type="PANTHER" id="PTHR43261">
    <property type="entry name" value="TRANSLATION ELONGATION FACTOR G-RELATED"/>
    <property type="match status" value="1"/>
</dbReference>
<dbReference type="Pfam" id="PF22042">
    <property type="entry name" value="EF-G_D2"/>
    <property type="match status" value="1"/>
</dbReference>
<dbReference type="Pfam" id="PF00679">
    <property type="entry name" value="EFG_C"/>
    <property type="match status" value="1"/>
</dbReference>
<dbReference type="Pfam" id="PF14492">
    <property type="entry name" value="EFG_III"/>
    <property type="match status" value="1"/>
</dbReference>
<dbReference type="Pfam" id="PF03764">
    <property type="entry name" value="EFG_IV"/>
    <property type="match status" value="1"/>
</dbReference>
<dbReference type="Pfam" id="PF00009">
    <property type="entry name" value="GTP_EFTU"/>
    <property type="match status" value="1"/>
</dbReference>
<dbReference type="PRINTS" id="PR00315">
    <property type="entry name" value="ELONGATNFCT"/>
</dbReference>
<dbReference type="SMART" id="SM00838">
    <property type="entry name" value="EFG_C"/>
    <property type="match status" value="1"/>
</dbReference>
<dbReference type="SMART" id="SM00889">
    <property type="entry name" value="EFG_IV"/>
    <property type="match status" value="1"/>
</dbReference>
<dbReference type="SUPFAM" id="SSF54980">
    <property type="entry name" value="EF-G C-terminal domain-like"/>
    <property type="match status" value="2"/>
</dbReference>
<dbReference type="SUPFAM" id="SSF52540">
    <property type="entry name" value="P-loop containing nucleoside triphosphate hydrolases"/>
    <property type="match status" value="1"/>
</dbReference>
<dbReference type="SUPFAM" id="SSF54211">
    <property type="entry name" value="Ribosomal protein S5 domain 2-like"/>
    <property type="match status" value="1"/>
</dbReference>
<dbReference type="SUPFAM" id="SSF50447">
    <property type="entry name" value="Translation proteins"/>
    <property type="match status" value="1"/>
</dbReference>
<dbReference type="PROSITE" id="PS00301">
    <property type="entry name" value="G_TR_1"/>
    <property type="match status" value="1"/>
</dbReference>
<dbReference type="PROSITE" id="PS51722">
    <property type="entry name" value="G_TR_2"/>
    <property type="match status" value="1"/>
</dbReference>
<name>EFG_STRP7</name>
<protein>
    <recommendedName>
        <fullName evidence="1">Elongation factor G</fullName>
        <shortName evidence="1">EF-G</shortName>
    </recommendedName>
</protein>
<keyword id="KW-0963">Cytoplasm</keyword>
<keyword id="KW-0251">Elongation factor</keyword>
<keyword id="KW-0342">GTP-binding</keyword>
<keyword id="KW-0547">Nucleotide-binding</keyword>
<keyword id="KW-0648">Protein biosynthesis</keyword>
<accession>C1CB46</accession>
<comment type="function">
    <text evidence="1">Catalyzes the GTP-dependent ribosomal translocation step during translation elongation. During this step, the ribosome changes from the pre-translocational (PRE) to the post-translocational (POST) state as the newly formed A-site-bound peptidyl-tRNA and P-site-bound deacylated tRNA move to the P and E sites, respectively. Catalyzes the coordinated movement of the two tRNA molecules, the mRNA and conformational changes in the ribosome.</text>
</comment>
<comment type="subcellular location">
    <subcellularLocation>
        <location evidence="1">Cytoplasm</location>
    </subcellularLocation>
</comment>
<comment type="similarity">
    <text evidence="1">Belongs to the TRAFAC class translation factor GTPase superfamily. Classic translation factor GTPase family. EF-G/EF-2 subfamily.</text>
</comment>
<gene>
    <name evidence="1" type="primary">fusA</name>
    <name type="ordered locus">SP70585_0331</name>
</gene>
<feature type="chain" id="PRO_1000201488" description="Elongation factor G">
    <location>
        <begin position="1"/>
        <end position="693"/>
    </location>
</feature>
<feature type="domain" description="tr-type G">
    <location>
        <begin position="8"/>
        <end position="282"/>
    </location>
</feature>
<feature type="binding site" evidence="1">
    <location>
        <begin position="17"/>
        <end position="24"/>
    </location>
    <ligand>
        <name>GTP</name>
        <dbReference type="ChEBI" id="CHEBI:37565"/>
    </ligand>
</feature>
<feature type="binding site" evidence="1">
    <location>
        <begin position="81"/>
        <end position="85"/>
    </location>
    <ligand>
        <name>GTP</name>
        <dbReference type="ChEBI" id="CHEBI:37565"/>
    </ligand>
</feature>
<feature type="binding site" evidence="1">
    <location>
        <begin position="135"/>
        <end position="138"/>
    </location>
    <ligand>
        <name>GTP</name>
        <dbReference type="ChEBI" id="CHEBI:37565"/>
    </ligand>
</feature>
<organism>
    <name type="scientific">Streptococcus pneumoniae (strain 70585)</name>
    <dbReference type="NCBI Taxonomy" id="488221"/>
    <lineage>
        <taxon>Bacteria</taxon>
        <taxon>Bacillati</taxon>
        <taxon>Bacillota</taxon>
        <taxon>Bacilli</taxon>
        <taxon>Lactobacillales</taxon>
        <taxon>Streptococcaceae</taxon>
        <taxon>Streptococcus</taxon>
    </lineage>
</organism>
<proteinExistence type="inferred from homology"/>